<organism>
    <name type="scientific">Escherichia coli O139:H28 (strain E24377A / ETEC)</name>
    <dbReference type="NCBI Taxonomy" id="331111"/>
    <lineage>
        <taxon>Bacteria</taxon>
        <taxon>Pseudomonadati</taxon>
        <taxon>Pseudomonadota</taxon>
        <taxon>Gammaproteobacteria</taxon>
        <taxon>Enterobacterales</taxon>
        <taxon>Enterobacteriaceae</taxon>
        <taxon>Escherichia</taxon>
    </lineage>
</organism>
<gene>
    <name evidence="1" type="primary">lpxH</name>
    <name type="ordered locus">EcE24377A_0563</name>
</gene>
<protein>
    <recommendedName>
        <fullName evidence="1">UDP-2,3-diacylglucosamine hydrolase</fullName>
        <ecNumber evidence="1">3.6.1.54</ecNumber>
    </recommendedName>
    <alternativeName>
        <fullName evidence="1">UDP-2,3-diacylglucosamine diphosphatase</fullName>
    </alternativeName>
</protein>
<sequence>MATLFIADLHLCVEEPAITAGFLRFLAGEARKADALYILGDLFEAWIGDDDPNPLHRQMAAAIKAVSDSGVPCYFIHGNRDFLLGKRFARESGMTLLPEEKVLELYGRRVLIMHGDTLCTDDAGYQAFRAKVHKPWLQMLFLALPLFVRKRIAARMRANSKEANSSKSLAIMDVNQNAVVSAMEKHQVQWLIHGHTHRPAVHELIANQQPAFRVVLGAWHTEGSMVKVTADDVELIHFPF</sequence>
<accession>A7ZIT3</accession>
<dbReference type="EC" id="3.6.1.54" evidence="1"/>
<dbReference type="EMBL" id="CP000800">
    <property type="protein sequence ID" value="ABV19098.1"/>
    <property type="molecule type" value="Genomic_DNA"/>
</dbReference>
<dbReference type="RefSeq" id="WP_000212252.1">
    <property type="nucleotide sequence ID" value="NC_009801.1"/>
</dbReference>
<dbReference type="SMR" id="A7ZIT3"/>
<dbReference type="GeneID" id="75204390"/>
<dbReference type="KEGG" id="ecw:EcE24377A_0563"/>
<dbReference type="HOGENOM" id="CLU_074586_0_0_6"/>
<dbReference type="UniPathway" id="UPA00359">
    <property type="reaction ID" value="UER00480"/>
</dbReference>
<dbReference type="Proteomes" id="UP000001122">
    <property type="component" value="Chromosome"/>
</dbReference>
<dbReference type="GO" id="GO:0005737">
    <property type="term" value="C:cytoplasm"/>
    <property type="evidence" value="ECO:0007669"/>
    <property type="project" value="InterPro"/>
</dbReference>
<dbReference type="GO" id="GO:0019897">
    <property type="term" value="C:extrinsic component of plasma membrane"/>
    <property type="evidence" value="ECO:0007669"/>
    <property type="project" value="UniProtKB-UniRule"/>
</dbReference>
<dbReference type="GO" id="GO:0030145">
    <property type="term" value="F:manganese ion binding"/>
    <property type="evidence" value="ECO:0007669"/>
    <property type="project" value="UniProtKB-UniRule"/>
</dbReference>
<dbReference type="GO" id="GO:0008758">
    <property type="term" value="F:UDP-2,3-diacylglucosamine hydrolase activity"/>
    <property type="evidence" value="ECO:0007669"/>
    <property type="project" value="UniProtKB-UniRule"/>
</dbReference>
<dbReference type="GO" id="GO:0009245">
    <property type="term" value="P:lipid A biosynthetic process"/>
    <property type="evidence" value="ECO:0007669"/>
    <property type="project" value="UniProtKB-UniRule"/>
</dbReference>
<dbReference type="CDD" id="cd07398">
    <property type="entry name" value="MPP_YbbF-LpxH"/>
    <property type="match status" value="1"/>
</dbReference>
<dbReference type="FunFam" id="3.60.21.10:FF:000012">
    <property type="entry name" value="UDP-2,3-diacylglucosamine hydrolase"/>
    <property type="match status" value="1"/>
</dbReference>
<dbReference type="Gene3D" id="3.60.21.10">
    <property type="match status" value="1"/>
</dbReference>
<dbReference type="HAMAP" id="MF_00575">
    <property type="entry name" value="LpxH"/>
    <property type="match status" value="1"/>
</dbReference>
<dbReference type="InterPro" id="IPR004843">
    <property type="entry name" value="Calcineurin-like_PHP_ApaH"/>
</dbReference>
<dbReference type="InterPro" id="IPR043461">
    <property type="entry name" value="LpxH-like"/>
</dbReference>
<dbReference type="InterPro" id="IPR029052">
    <property type="entry name" value="Metallo-depent_PP-like"/>
</dbReference>
<dbReference type="InterPro" id="IPR010138">
    <property type="entry name" value="UDP-diacylglucosamine_Hdrlase"/>
</dbReference>
<dbReference type="NCBIfam" id="TIGR01854">
    <property type="entry name" value="lipid_A_lpxH"/>
    <property type="match status" value="1"/>
</dbReference>
<dbReference type="NCBIfam" id="NF003743">
    <property type="entry name" value="PRK05340.1"/>
    <property type="match status" value="1"/>
</dbReference>
<dbReference type="PANTHER" id="PTHR34990:SF1">
    <property type="entry name" value="UDP-2,3-DIACYLGLUCOSAMINE HYDROLASE"/>
    <property type="match status" value="1"/>
</dbReference>
<dbReference type="PANTHER" id="PTHR34990">
    <property type="entry name" value="UDP-2,3-DIACYLGLUCOSAMINE HYDROLASE-RELATED"/>
    <property type="match status" value="1"/>
</dbReference>
<dbReference type="Pfam" id="PF00149">
    <property type="entry name" value="Metallophos"/>
    <property type="match status" value="1"/>
</dbReference>
<dbReference type="SUPFAM" id="SSF56300">
    <property type="entry name" value="Metallo-dependent phosphatases"/>
    <property type="match status" value="1"/>
</dbReference>
<reference key="1">
    <citation type="journal article" date="2008" name="J. Bacteriol.">
        <title>The pangenome structure of Escherichia coli: comparative genomic analysis of E. coli commensal and pathogenic isolates.</title>
        <authorList>
            <person name="Rasko D.A."/>
            <person name="Rosovitz M.J."/>
            <person name="Myers G.S.A."/>
            <person name="Mongodin E.F."/>
            <person name="Fricke W.F."/>
            <person name="Gajer P."/>
            <person name="Crabtree J."/>
            <person name="Sebaihia M."/>
            <person name="Thomson N.R."/>
            <person name="Chaudhuri R."/>
            <person name="Henderson I.R."/>
            <person name="Sperandio V."/>
            <person name="Ravel J."/>
        </authorList>
    </citation>
    <scope>NUCLEOTIDE SEQUENCE [LARGE SCALE GENOMIC DNA]</scope>
    <source>
        <strain>E24377A / ETEC</strain>
    </source>
</reference>
<comment type="function">
    <text evidence="1">Hydrolyzes the pyrophosphate bond of UDP-2,3-diacylglucosamine to yield 2,3-diacylglucosamine 1-phosphate (lipid X) and UMP by catalyzing the attack of water at the alpha-P atom. Involved in the biosynthesis of lipid A, a phosphorylated glycolipid that anchors the lipopolysaccharide to the outer membrane of the cell.</text>
</comment>
<comment type="catalytic activity">
    <reaction evidence="1">
        <text>UDP-2-N,3-O-bis[(3R)-3-hydroxytetradecanoyl]-alpha-D-glucosamine + H2O = 2-N,3-O-bis[(3R)-3-hydroxytetradecanoyl]-alpha-D-glucosaminyl 1-phosphate + UMP + 2 H(+)</text>
        <dbReference type="Rhea" id="RHEA:25213"/>
        <dbReference type="ChEBI" id="CHEBI:15377"/>
        <dbReference type="ChEBI" id="CHEBI:15378"/>
        <dbReference type="ChEBI" id="CHEBI:57865"/>
        <dbReference type="ChEBI" id="CHEBI:57957"/>
        <dbReference type="ChEBI" id="CHEBI:78847"/>
        <dbReference type="EC" id="3.6.1.54"/>
    </reaction>
</comment>
<comment type="cofactor">
    <cofactor evidence="1">
        <name>Mn(2+)</name>
        <dbReference type="ChEBI" id="CHEBI:29035"/>
    </cofactor>
    <text evidence="1">Binds 2 Mn(2+) ions per subunit in a binuclear metal center.</text>
</comment>
<comment type="pathway">
    <text evidence="1">Glycolipid biosynthesis; lipid IV(A) biosynthesis; lipid IV(A) from (3R)-3-hydroxytetradecanoyl-[acyl-carrier-protein] and UDP-N-acetyl-alpha-D-glucosamine: step 4/6.</text>
</comment>
<comment type="subcellular location">
    <subcellularLocation>
        <location evidence="1">Cell inner membrane</location>
        <topology evidence="1">Peripheral membrane protein</topology>
        <orientation evidence="1">Cytoplasmic side</orientation>
    </subcellularLocation>
</comment>
<comment type="similarity">
    <text evidence="1">Belongs to the LpxH family.</text>
</comment>
<keyword id="KW-0997">Cell inner membrane</keyword>
<keyword id="KW-1003">Cell membrane</keyword>
<keyword id="KW-0378">Hydrolase</keyword>
<keyword id="KW-0441">Lipid A biosynthesis</keyword>
<keyword id="KW-0444">Lipid biosynthesis</keyword>
<keyword id="KW-0443">Lipid metabolism</keyword>
<keyword id="KW-0464">Manganese</keyword>
<keyword id="KW-0472">Membrane</keyword>
<keyword id="KW-0479">Metal-binding</keyword>
<keyword id="KW-1185">Reference proteome</keyword>
<evidence type="ECO:0000255" key="1">
    <source>
        <dbReference type="HAMAP-Rule" id="MF_00575"/>
    </source>
</evidence>
<proteinExistence type="inferred from homology"/>
<name>LPXH_ECO24</name>
<feature type="chain" id="PRO_1000061172" description="UDP-2,3-diacylglucosamine hydrolase">
    <location>
        <begin position="1"/>
        <end position="240"/>
    </location>
</feature>
<feature type="binding site" evidence="1">
    <location>
        <position position="8"/>
    </location>
    <ligand>
        <name>Mn(2+)</name>
        <dbReference type="ChEBI" id="CHEBI:29035"/>
        <label>1</label>
    </ligand>
</feature>
<feature type="binding site" evidence="1">
    <location>
        <position position="10"/>
    </location>
    <ligand>
        <name>Mn(2+)</name>
        <dbReference type="ChEBI" id="CHEBI:29035"/>
        <label>1</label>
    </ligand>
</feature>
<feature type="binding site" evidence="1">
    <location>
        <position position="41"/>
    </location>
    <ligand>
        <name>Mn(2+)</name>
        <dbReference type="ChEBI" id="CHEBI:29035"/>
        <label>1</label>
    </ligand>
</feature>
<feature type="binding site" evidence="1">
    <location>
        <position position="41"/>
    </location>
    <ligand>
        <name>Mn(2+)</name>
        <dbReference type="ChEBI" id="CHEBI:29035"/>
        <label>2</label>
    </ligand>
</feature>
<feature type="binding site" evidence="1">
    <location>
        <begin position="79"/>
        <end position="80"/>
    </location>
    <ligand>
        <name>substrate</name>
    </ligand>
</feature>
<feature type="binding site" evidence="1">
    <location>
        <position position="79"/>
    </location>
    <ligand>
        <name>Mn(2+)</name>
        <dbReference type="ChEBI" id="CHEBI:29035"/>
        <label>2</label>
    </ligand>
</feature>
<feature type="binding site" evidence="1">
    <location>
        <position position="114"/>
    </location>
    <ligand>
        <name>Mn(2+)</name>
        <dbReference type="ChEBI" id="CHEBI:29035"/>
        <label>2</label>
    </ligand>
</feature>
<feature type="binding site" evidence="1">
    <location>
        <position position="122"/>
    </location>
    <ligand>
        <name>substrate</name>
    </ligand>
</feature>
<feature type="binding site" evidence="1">
    <location>
        <position position="160"/>
    </location>
    <ligand>
        <name>substrate</name>
    </ligand>
</feature>
<feature type="binding site" evidence="1">
    <location>
        <position position="164"/>
    </location>
    <ligand>
        <name>substrate</name>
    </ligand>
</feature>
<feature type="binding site" evidence="1">
    <location>
        <position position="167"/>
    </location>
    <ligand>
        <name>substrate</name>
    </ligand>
</feature>
<feature type="binding site" evidence="1">
    <location>
        <position position="195"/>
    </location>
    <ligand>
        <name>Mn(2+)</name>
        <dbReference type="ChEBI" id="CHEBI:29035"/>
        <label>2</label>
    </ligand>
</feature>
<feature type="binding site" evidence="1">
    <location>
        <position position="195"/>
    </location>
    <ligand>
        <name>substrate</name>
    </ligand>
</feature>
<feature type="binding site" evidence="1">
    <location>
        <position position="197"/>
    </location>
    <ligand>
        <name>Mn(2+)</name>
        <dbReference type="ChEBI" id="CHEBI:29035"/>
        <label>1</label>
    </ligand>
</feature>